<evidence type="ECO:0000255" key="1">
    <source>
        <dbReference type="HAMAP-Rule" id="MF_00633"/>
    </source>
</evidence>
<keyword id="KW-0150">Chloroplast</keyword>
<keyword id="KW-0249">Electron transport</keyword>
<keyword id="KW-0349">Heme</keyword>
<keyword id="KW-0408">Iron</keyword>
<keyword id="KW-0472">Membrane</keyword>
<keyword id="KW-0479">Metal-binding</keyword>
<keyword id="KW-0602">Photosynthesis</keyword>
<keyword id="KW-0934">Plastid</keyword>
<keyword id="KW-0793">Thylakoid</keyword>
<keyword id="KW-0812">Transmembrane</keyword>
<keyword id="KW-1133">Transmembrane helix</keyword>
<keyword id="KW-0813">Transport</keyword>
<geneLocation type="chloroplast"/>
<gene>
    <name evidence="1" type="primary">petB</name>
</gene>
<proteinExistence type="inferred from homology"/>
<reference key="1">
    <citation type="journal article" date="1989" name="Plant Mol. Biol.">
        <title>Nucleotide sequence of the plastid genes for apocytochrome b6 (petB) and subunit IV of the cytochrome b6-f complex (petD) from the green alga Chlorella protothecoides: lack of introns.</title>
        <authorList>
            <person name="Reimann A."/>
            <person name="Kueck U."/>
        </authorList>
    </citation>
    <scope>NUCLEOTIDE SEQUENCE [GENOMIC DNA]</scope>
    <source>
        <strain>ATCC 30407 / UTEX 25 / SAG 211-7A</strain>
    </source>
</reference>
<dbReference type="EMBL" id="X15244">
    <property type="protein sequence ID" value="CAA33322.1"/>
    <property type="molecule type" value="Genomic_DNA"/>
</dbReference>
<dbReference type="PIR" id="S06159">
    <property type="entry name" value="CBKL6P"/>
</dbReference>
<dbReference type="SMR" id="P13347"/>
<dbReference type="GO" id="GO:0009535">
    <property type="term" value="C:chloroplast thylakoid membrane"/>
    <property type="evidence" value="ECO:0007669"/>
    <property type="project" value="UniProtKB-SubCell"/>
</dbReference>
<dbReference type="GO" id="GO:0045158">
    <property type="term" value="F:electron transporter, transferring electrons within cytochrome b6/f complex of photosystem II activity"/>
    <property type="evidence" value="ECO:0007669"/>
    <property type="project" value="UniProtKB-UniRule"/>
</dbReference>
<dbReference type="GO" id="GO:0046872">
    <property type="term" value="F:metal ion binding"/>
    <property type="evidence" value="ECO:0007669"/>
    <property type="project" value="UniProtKB-KW"/>
</dbReference>
<dbReference type="GO" id="GO:0016491">
    <property type="term" value="F:oxidoreductase activity"/>
    <property type="evidence" value="ECO:0007669"/>
    <property type="project" value="InterPro"/>
</dbReference>
<dbReference type="GO" id="GO:0015979">
    <property type="term" value="P:photosynthesis"/>
    <property type="evidence" value="ECO:0007669"/>
    <property type="project" value="UniProtKB-UniRule"/>
</dbReference>
<dbReference type="GO" id="GO:0022904">
    <property type="term" value="P:respiratory electron transport chain"/>
    <property type="evidence" value="ECO:0007669"/>
    <property type="project" value="InterPro"/>
</dbReference>
<dbReference type="CDD" id="cd00284">
    <property type="entry name" value="Cytochrome_b_N"/>
    <property type="match status" value="1"/>
</dbReference>
<dbReference type="FunFam" id="1.20.810.10:FF:000001">
    <property type="entry name" value="Cytochrome b6"/>
    <property type="match status" value="1"/>
</dbReference>
<dbReference type="Gene3D" id="1.20.810.10">
    <property type="entry name" value="Cytochrome Bc1 Complex, Chain C"/>
    <property type="match status" value="1"/>
</dbReference>
<dbReference type="HAMAP" id="MF_00633">
    <property type="entry name" value="Cytb6_f_cytb6"/>
    <property type="match status" value="1"/>
</dbReference>
<dbReference type="InterPro" id="IPR005797">
    <property type="entry name" value="Cyt_b/b6_N"/>
</dbReference>
<dbReference type="InterPro" id="IPR023530">
    <property type="entry name" value="Cyt_B6_PetB"/>
</dbReference>
<dbReference type="InterPro" id="IPR027387">
    <property type="entry name" value="Cytb/b6-like_sf"/>
</dbReference>
<dbReference type="InterPro" id="IPR048259">
    <property type="entry name" value="Cytochrome_b_N_euk/bac"/>
</dbReference>
<dbReference type="InterPro" id="IPR016174">
    <property type="entry name" value="Di-haem_cyt_TM"/>
</dbReference>
<dbReference type="NCBIfam" id="NF002990">
    <property type="entry name" value="PRK03735.1"/>
    <property type="match status" value="1"/>
</dbReference>
<dbReference type="PANTHER" id="PTHR19271">
    <property type="entry name" value="CYTOCHROME B"/>
    <property type="match status" value="1"/>
</dbReference>
<dbReference type="PANTHER" id="PTHR19271:SF16">
    <property type="entry name" value="CYTOCHROME B"/>
    <property type="match status" value="1"/>
</dbReference>
<dbReference type="Pfam" id="PF00033">
    <property type="entry name" value="Cytochrome_B"/>
    <property type="match status" value="1"/>
</dbReference>
<dbReference type="PIRSF" id="PIRSF000032">
    <property type="entry name" value="Cytochrome_b6"/>
    <property type="match status" value="1"/>
</dbReference>
<dbReference type="SUPFAM" id="SSF81342">
    <property type="entry name" value="Transmembrane di-heme cytochromes"/>
    <property type="match status" value="1"/>
</dbReference>
<dbReference type="PROSITE" id="PS51002">
    <property type="entry name" value="CYTB_NTER"/>
    <property type="match status" value="1"/>
</dbReference>
<comment type="function">
    <text evidence="1">Component of the cytochrome b6-f complex, which mediates electron transfer between photosystem II (PSII) and photosystem I (PSI), cyclic electron flow around PSI, and state transitions.</text>
</comment>
<comment type="cofactor">
    <cofactor evidence="1">
        <name>heme b</name>
        <dbReference type="ChEBI" id="CHEBI:60344"/>
    </cofactor>
    <text evidence="1">Binds 2 heme b groups non-covalently with two histidine residues as axial ligands.</text>
</comment>
<comment type="cofactor">
    <cofactor evidence="1">
        <name>heme c</name>
        <dbReference type="ChEBI" id="CHEBI:61717"/>
    </cofactor>
    <text evidence="1">Binds one heme group covalently by a single cysteine link with no axial amino acid ligand. This heme was named heme ci.</text>
</comment>
<comment type="subunit">
    <text evidence="1">The 4 large subunits of the cytochrome b6-f complex are cytochrome b6, subunit IV (17 kDa polypeptide, PetD), cytochrome f and the Rieske protein, while the 4 small subunits are PetG, PetL, PetM and PetN. The complex functions as a dimer.</text>
</comment>
<comment type="subcellular location">
    <subcellularLocation>
        <location evidence="1">Plastid</location>
        <location evidence="1">Chloroplast thylakoid membrane</location>
        <topology evidence="1">Multi-pass membrane protein</topology>
    </subcellularLocation>
</comment>
<comment type="miscellaneous">
    <text evidence="1">Heme 1 (or BH or b566) is high-potential and absorbs at about 566 nm, and heme 2 (or BL or b562) is low-potential and absorbs at about 562 nm.</text>
</comment>
<comment type="similarity">
    <text evidence="1">Belongs to the cytochrome b family. PetB subfamily.</text>
</comment>
<name>CYB6_AUXPR</name>
<organism>
    <name type="scientific">Auxenochlorella protothecoides</name>
    <name type="common">Green microalga</name>
    <name type="synonym">Chlorella protothecoides</name>
    <dbReference type="NCBI Taxonomy" id="3075"/>
    <lineage>
        <taxon>Eukaryota</taxon>
        <taxon>Viridiplantae</taxon>
        <taxon>Chlorophyta</taxon>
        <taxon>core chlorophytes</taxon>
        <taxon>Trebouxiophyceae</taxon>
        <taxon>Chlorellales</taxon>
        <taxon>Chlorellaceae</taxon>
        <taxon>Auxenochlorella</taxon>
    </lineage>
</organism>
<protein>
    <recommendedName>
        <fullName evidence="1">Cytochrome b6</fullName>
    </recommendedName>
</protein>
<feature type="chain" id="PRO_0000061786" description="Cytochrome b6">
    <location>
        <begin position="1"/>
        <end position="215"/>
    </location>
</feature>
<feature type="transmembrane region" description="Helical" evidence="1">
    <location>
        <begin position="32"/>
        <end position="52"/>
    </location>
</feature>
<feature type="transmembrane region" description="Helical" evidence="1">
    <location>
        <begin position="90"/>
        <end position="110"/>
    </location>
</feature>
<feature type="transmembrane region" description="Helical" evidence="1">
    <location>
        <begin position="116"/>
        <end position="136"/>
    </location>
</feature>
<feature type="transmembrane region" description="Helical" evidence="1">
    <location>
        <begin position="186"/>
        <end position="206"/>
    </location>
</feature>
<feature type="binding site" description="covalent" evidence="1">
    <location>
        <position position="35"/>
    </location>
    <ligand>
        <name>heme c</name>
        <dbReference type="ChEBI" id="CHEBI:61717"/>
    </ligand>
</feature>
<feature type="binding site" description="axial binding residue" evidence="1">
    <location>
        <position position="86"/>
    </location>
    <ligand>
        <name>heme b</name>
        <dbReference type="ChEBI" id="CHEBI:60344"/>
        <label>2</label>
    </ligand>
    <ligandPart>
        <name>Fe</name>
        <dbReference type="ChEBI" id="CHEBI:18248"/>
    </ligandPart>
</feature>
<feature type="binding site" description="axial binding residue" evidence="1">
    <location>
        <position position="100"/>
    </location>
    <ligand>
        <name>heme b</name>
        <dbReference type="ChEBI" id="CHEBI:60344"/>
        <label>1</label>
    </ligand>
    <ligandPart>
        <name>Fe</name>
        <dbReference type="ChEBI" id="CHEBI:18248"/>
    </ligandPart>
</feature>
<feature type="binding site" description="axial binding residue" evidence="1">
    <location>
        <position position="187"/>
    </location>
    <ligand>
        <name>heme b</name>
        <dbReference type="ChEBI" id="CHEBI:60344"/>
        <label>2</label>
    </ligand>
    <ligandPart>
        <name>Fe</name>
        <dbReference type="ChEBI" id="CHEBI:18248"/>
    </ligandPart>
</feature>
<feature type="binding site" description="axial binding residue" evidence="1">
    <location>
        <position position="202"/>
    </location>
    <ligand>
        <name>heme b</name>
        <dbReference type="ChEBI" id="CHEBI:60344"/>
        <label>1</label>
    </ligand>
    <ligandPart>
        <name>Fe</name>
        <dbReference type="ChEBI" id="CHEBI:18248"/>
    </ligandPart>
</feature>
<sequence>MSKIYDWFEERLEIQSIADDISSKYVPPHVNIFYCFGGITFTCFLVQVATGFAMTFYYRPTVAEAFTSVQYLMTQVNFGWLIRSIHRWSASMMVLMMILHIFRVYLTGGFKKPRELTWVTGVLMAVCTVSFGVTGYSLPWDQIGYWAVKIVTGVPDAIPVIGQVLLELLRGGVAVGQSTLTRFYSLHTFVLPLFTAVFMLMHFLMIRKQGISGPL</sequence>
<accession>P13347</accession>